<comment type="function">
    <text evidence="1">Catalyzes the reversible cleavage of L-rhamnulose-1-phosphate to dihydroxyacetone phosphate (DHAP) and L-lactaldehyde.</text>
</comment>
<comment type="catalytic activity">
    <reaction evidence="1">
        <text>L-rhamnulose 1-phosphate = (S)-lactaldehyde + dihydroxyacetone phosphate</text>
        <dbReference type="Rhea" id="RHEA:19689"/>
        <dbReference type="ChEBI" id="CHEBI:18041"/>
        <dbReference type="ChEBI" id="CHEBI:57642"/>
        <dbReference type="ChEBI" id="CHEBI:58313"/>
        <dbReference type="EC" id="4.1.2.19"/>
    </reaction>
</comment>
<comment type="cofactor">
    <cofactor evidence="1">
        <name>Zn(2+)</name>
        <dbReference type="ChEBI" id="CHEBI:29105"/>
    </cofactor>
    <text evidence="1">Binds 1 zinc ion per subunit.</text>
</comment>
<comment type="pathway">
    <text evidence="1">Carbohydrate degradation; L-rhamnose degradation; glycerone phosphate from L-rhamnose: step 3/3.</text>
</comment>
<comment type="subunit">
    <text evidence="1">Homotetramer.</text>
</comment>
<comment type="subcellular location">
    <subcellularLocation>
        <location evidence="1">Cytoplasm</location>
    </subcellularLocation>
</comment>
<comment type="similarity">
    <text evidence="1">Belongs to the aldolase class II family. RhaD subfamily.</text>
</comment>
<gene>
    <name evidence="1" type="primary">rhaD</name>
    <name type="ordered locus">SeAg_B4288</name>
</gene>
<proteinExistence type="inferred from homology"/>
<accession>B5F0M6</accession>
<dbReference type="EC" id="4.1.2.19" evidence="1"/>
<dbReference type="EMBL" id="CP001138">
    <property type="protein sequence ID" value="ACH50756.1"/>
    <property type="molecule type" value="Genomic_DNA"/>
</dbReference>
<dbReference type="RefSeq" id="WP_001179685.1">
    <property type="nucleotide sequence ID" value="NC_011149.1"/>
</dbReference>
<dbReference type="SMR" id="B5F0M6"/>
<dbReference type="KEGG" id="sea:SeAg_B4288"/>
<dbReference type="HOGENOM" id="CLU_076831_0_0_6"/>
<dbReference type="UniPathway" id="UPA00541">
    <property type="reaction ID" value="UER00603"/>
</dbReference>
<dbReference type="Proteomes" id="UP000008819">
    <property type="component" value="Chromosome"/>
</dbReference>
<dbReference type="GO" id="GO:0005829">
    <property type="term" value="C:cytosol"/>
    <property type="evidence" value="ECO:0007669"/>
    <property type="project" value="TreeGrafter"/>
</dbReference>
<dbReference type="GO" id="GO:0046872">
    <property type="term" value="F:metal ion binding"/>
    <property type="evidence" value="ECO:0007669"/>
    <property type="project" value="UniProtKB-KW"/>
</dbReference>
<dbReference type="GO" id="GO:0008994">
    <property type="term" value="F:rhamnulose-1-phosphate aldolase activity"/>
    <property type="evidence" value="ECO:0007669"/>
    <property type="project" value="UniProtKB-UniRule"/>
</dbReference>
<dbReference type="GO" id="GO:0019323">
    <property type="term" value="P:pentose catabolic process"/>
    <property type="evidence" value="ECO:0007669"/>
    <property type="project" value="TreeGrafter"/>
</dbReference>
<dbReference type="GO" id="GO:0019301">
    <property type="term" value="P:rhamnose catabolic process"/>
    <property type="evidence" value="ECO:0007669"/>
    <property type="project" value="UniProtKB-UniRule"/>
</dbReference>
<dbReference type="CDD" id="cd00398">
    <property type="entry name" value="Aldolase_II"/>
    <property type="match status" value="1"/>
</dbReference>
<dbReference type="FunFam" id="3.40.225.10:FF:000006">
    <property type="entry name" value="Rhamnulose-1-phosphate aldolase"/>
    <property type="match status" value="1"/>
</dbReference>
<dbReference type="Gene3D" id="3.40.225.10">
    <property type="entry name" value="Class II aldolase/adducin N-terminal domain"/>
    <property type="match status" value="1"/>
</dbReference>
<dbReference type="HAMAP" id="MF_00770">
    <property type="entry name" value="RhaD"/>
    <property type="match status" value="1"/>
</dbReference>
<dbReference type="InterPro" id="IPR050197">
    <property type="entry name" value="Aldolase_class_II_sugar_metab"/>
</dbReference>
<dbReference type="InterPro" id="IPR001303">
    <property type="entry name" value="Aldolase_II/adducin_N"/>
</dbReference>
<dbReference type="InterPro" id="IPR036409">
    <property type="entry name" value="Aldolase_II/adducin_N_sf"/>
</dbReference>
<dbReference type="InterPro" id="IPR013447">
    <property type="entry name" value="Rhamnulose-1-P_Aldolase"/>
</dbReference>
<dbReference type="NCBIfam" id="NF002963">
    <property type="entry name" value="PRK03634.1"/>
    <property type="match status" value="1"/>
</dbReference>
<dbReference type="NCBIfam" id="TIGR02624">
    <property type="entry name" value="rhamnu_1P_ald"/>
    <property type="match status" value="1"/>
</dbReference>
<dbReference type="PANTHER" id="PTHR22789">
    <property type="entry name" value="FUCULOSE PHOSPHATE ALDOLASE"/>
    <property type="match status" value="1"/>
</dbReference>
<dbReference type="PANTHER" id="PTHR22789:SF16">
    <property type="entry name" value="RHAMNULOSE-1-PHOSPHATE ALDOLASE"/>
    <property type="match status" value="1"/>
</dbReference>
<dbReference type="Pfam" id="PF00596">
    <property type="entry name" value="Aldolase_II"/>
    <property type="match status" value="1"/>
</dbReference>
<dbReference type="SMART" id="SM01007">
    <property type="entry name" value="Aldolase_II"/>
    <property type="match status" value="1"/>
</dbReference>
<dbReference type="SUPFAM" id="SSF53639">
    <property type="entry name" value="AraD/HMP-PK domain-like"/>
    <property type="match status" value="1"/>
</dbReference>
<name>RHAD_SALA4</name>
<organism>
    <name type="scientific">Salmonella agona (strain SL483)</name>
    <dbReference type="NCBI Taxonomy" id="454166"/>
    <lineage>
        <taxon>Bacteria</taxon>
        <taxon>Pseudomonadati</taxon>
        <taxon>Pseudomonadota</taxon>
        <taxon>Gammaproteobacteria</taxon>
        <taxon>Enterobacterales</taxon>
        <taxon>Enterobacteriaceae</taxon>
        <taxon>Salmonella</taxon>
    </lineage>
</organism>
<evidence type="ECO:0000255" key="1">
    <source>
        <dbReference type="HAMAP-Rule" id="MF_00770"/>
    </source>
</evidence>
<keyword id="KW-0963">Cytoplasm</keyword>
<keyword id="KW-0456">Lyase</keyword>
<keyword id="KW-0479">Metal-binding</keyword>
<keyword id="KW-0684">Rhamnose metabolism</keyword>
<keyword id="KW-0862">Zinc</keyword>
<reference key="1">
    <citation type="journal article" date="2011" name="J. Bacteriol.">
        <title>Comparative genomics of 28 Salmonella enterica isolates: evidence for CRISPR-mediated adaptive sublineage evolution.</title>
        <authorList>
            <person name="Fricke W.F."/>
            <person name="Mammel M.K."/>
            <person name="McDermott P.F."/>
            <person name="Tartera C."/>
            <person name="White D.G."/>
            <person name="Leclerc J.E."/>
            <person name="Ravel J."/>
            <person name="Cebula T.A."/>
        </authorList>
    </citation>
    <scope>NUCLEOTIDE SEQUENCE [LARGE SCALE GENOMIC DNA]</scope>
    <source>
        <strain>SL483</strain>
    </source>
</reference>
<sequence>MQNITDSWFVQGMIKATSDAWLKGWDERNGGNLTLRLDEADIAPFAANFHEKPRYIALSQPMPLLANTPFIVTGSGKFFRNVQLDPAANLGVVKIDSDGAGYHILWGLTHDAVPTSELPAHFLSHCERIKATHGKDRVIMHCHATNLIALTYVLENNTALITRKLWEGSTECLVVFPDGVGILPWMVPGTDEIGQATAQEMQKHSLVLWPFHGVFGSGPTLDETFGLIDTAEKSAEVLVKIYSMGGMKQTITREELVALGKRFGVTPLASAVALY</sequence>
<feature type="chain" id="PRO_1000193731" description="Rhamnulose-1-phosphate aldolase">
    <location>
        <begin position="1"/>
        <end position="275"/>
    </location>
</feature>
<feature type="active site" evidence="1">
    <location>
        <position position="117"/>
    </location>
</feature>
<feature type="binding site" evidence="1">
    <location>
        <position position="141"/>
    </location>
    <ligand>
        <name>Zn(2+)</name>
        <dbReference type="ChEBI" id="CHEBI:29105"/>
    </ligand>
</feature>
<feature type="binding site" evidence="1">
    <location>
        <position position="143"/>
    </location>
    <ligand>
        <name>Zn(2+)</name>
        <dbReference type="ChEBI" id="CHEBI:29105"/>
    </ligand>
</feature>
<feature type="binding site" evidence="1">
    <location>
        <position position="212"/>
    </location>
    <ligand>
        <name>Zn(2+)</name>
        <dbReference type="ChEBI" id="CHEBI:29105"/>
    </ligand>
</feature>
<protein>
    <recommendedName>
        <fullName evidence="1">Rhamnulose-1-phosphate aldolase</fullName>
        <ecNumber evidence="1">4.1.2.19</ecNumber>
    </recommendedName>
</protein>